<comment type="catalytic activity">
    <reaction evidence="1">
        <text>(6R)-10-formyltetrahydrofolate + 5-amino-1-(5-phospho-beta-D-ribosyl)imidazole-4-carboxamide = 5-formamido-1-(5-phospho-D-ribosyl)imidazole-4-carboxamide + (6S)-5,6,7,8-tetrahydrofolate</text>
        <dbReference type="Rhea" id="RHEA:22192"/>
        <dbReference type="ChEBI" id="CHEBI:57453"/>
        <dbReference type="ChEBI" id="CHEBI:58467"/>
        <dbReference type="ChEBI" id="CHEBI:58475"/>
        <dbReference type="ChEBI" id="CHEBI:195366"/>
        <dbReference type="EC" id="2.1.2.3"/>
    </reaction>
</comment>
<comment type="catalytic activity">
    <reaction evidence="1">
        <text>IMP + H2O = 5-formamido-1-(5-phospho-D-ribosyl)imidazole-4-carboxamide</text>
        <dbReference type="Rhea" id="RHEA:18445"/>
        <dbReference type="ChEBI" id="CHEBI:15377"/>
        <dbReference type="ChEBI" id="CHEBI:58053"/>
        <dbReference type="ChEBI" id="CHEBI:58467"/>
        <dbReference type="EC" id="3.5.4.10"/>
    </reaction>
</comment>
<comment type="pathway">
    <text evidence="1">Purine metabolism; IMP biosynthesis via de novo pathway; 5-formamido-1-(5-phospho-D-ribosyl)imidazole-4-carboxamide from 5-amino-1-(5-phospho-D-ribosyl)imidazole-4-carboxamide (10-formyl THF route): step 1/1.</text>
</comment>
<comment type="pathway">
    <text evidence="1">Purine metabolism; IMP biosynthesis via de novo pathway; IMP from 5-formamido-1-(5-phospho-D-ribosyl)imidazole-4-carboxamide: step 1/1.</text>
</comment>
<comment type="domain">
    <text evidence="1">The IMP cyclohydrolase activity resides in the N-terminal region.</text>
</comment>
<comment type="similarity">
    <text evidence="1">Belongs to the PurH family.</text>
</comment>
<evidence type="ECO:0000255" key="1">
    <source>
        <dbReference type="HAMAP-Rule" id="MF_00139"/>
    </source>
</evidence>
<evidence type="ECO:0000255" key="2">
    <source>
        <dbReference type="PROSITE-ProRule" id="PRU01202"/>
    </source>
</evidence>
<sequence length="529" mass="57358">MQQRRPVRRALLSVSDKAGIVEFAQALSARGVELLSTGGTARLLAEKGLPVTEVSDYTGFPEMMDGRVKTLHPKVHGGILGRRGQDDAIMEEHQIQPIDMVVVNLYPFAQTVAREGCSLEDAVENIDIGGPTMVRSAAKNHKDVAIVVKSSDYDAIIKEMDDNEGSLTLATRFDLAIKAFEHTAAYDSMIANYFGSMVPAYHGESKEAAGRFPRTLNLNFIKKQDMRYGENSHQQAAFYIEENVKEASVATATQVQGKALSYNNIADTDAALECVKEFAEPACVIVKHANPCGVAIGNSILDAYDRAYKTDPTSAFGGIIAFNRELDAETAQAIISRQFVEVIIAPSASEEALKITAAKQNVRVLTCGQWGERVPGLDFKRVNGGLLVQDRDLGMVGAEELRVVTQRQPTEQELRDALFCWKVAKFVKSNAIVYAKNNMTIGIGAGQMSRVYSAKIAGIKAADEGLEVKGSSMASDAFFPFRDGIDAAAAAGVTCVIQPGGSIRDDEVIAAADEHGIAMLFTDMRHFRH</sequence>
<keyword id="KW-0007">Acetylation</keyword>
<keyword id="KW-0378">Hydrolase</keyword>
<keyword id="KW-0511">Multifunctional enzyme</keyword>
<keyword id="KW-0658">Purine biosynthesis</keyword>
<keyword id="KW-0808">Transferase</keyword>
<proteinExistence type="inferred from homology"/>
<organism>
    <name type="scientific">Escherichia coli (strain SE11)</name>
    <dbReference type="NCBI Taxonomy" id="409438"/>
    <lineage>
        <taxon>Bacteria</taxon>
        <taxon>Pseudomonadati</taxon>
        <taxon>Pseudomonadota</taxon>
        <taxon>Gammaproteobacteria</taxon>
        <taxon>Enterobacterales</taxon>
        <taxon>Enterobacteriaceae</taxon>
        <taxon>Escherichia</taxon>
    </lineage>
</organism>
<name>PUR9_ECOSE</name>
<protein>
    <recommendedName>
        <fullName evidence="1">Bifunctional purine biosynthesis protein PurH</fullName>
    </recommendedName>
    <domain>
        <recommendedName>
            <fullName evidence="1">Phosphoribosylaminoimidazolecarboxamide formyltransferase</fullName>
            <ecNumber evidence="1">2.1.2.3</ecNumber>
        </recommendedName>
        <alternativeName>
            <fullName evidence="1">AICAR transformylase</fullName>
        </alternativeName>
    </domain>
    <domain>
        <recommendedName>
            <fullName evidence="1">IMP cyclohydrolase</fullName>
            <ecNumber evidence="1">3.5.4.10</ecNumber>
        </recommendedName>
        <alternativeName>
            <fullName evidence="1">ATIC</fullName>
        </alternativeName>
        <alternativeName>
            <fullName evidence="1">IMP synthase</fullName>
        </alternativeName>
        <alternativeName>
            <fullName evidence="1">Inosinicase</fullName>
        </alternativeName>
    </domain>
</protein>
<dbReference type="EC" id="2.1.2.3" evidence="1"/>
<dbReference type="EC" id="3.5.4.10" evidence="1"/>
<dbReference type="EMBL" id="AP009240">
    <property type="protein sequence ID" value="BAG79819.1"/>
    <property type="molecule type" value="Genomic_DNA"/>
</dbReference>
<dbReference type="RefSeq" id="WP_001187566.1">
    <property type="nucleotide sequence ID" value="NC_011415.1"/>
</dbReference>
<dbReference type="SMR" id="B6I5L8"/>
<dbReference type="KEGG" id="ecy:ECSE_4295"/>
<dbReference type="HOGENOM" id="CLU_016316_5_2_6"/>
<dbReference type="UniPathway" id="UPA00074">
    <property type="reaction ID" value="UER00133"/>
</dbReference>
<dbReference type="UniPathway" id="UPA00074">
    <property type="reaction ID" value="UER00135"/>
</dbReference>
<dbReference type="Proteomes" id="UP000008199">
    <property type="component" value="Chromosome"/>
</dbReference>
<dbReference type="GO" id="GO:0005829">
    <property type="term" value="C:cytosol"/>
    <property type="evidence" value="ECO:0007669"/>
    <property type="project" value="TreeGrafter"/>
</dbReference>
<dbReference type="GO" id="GO:0003937">
    <property type="term" value="F:IMP cyclohydrolase activity"/>
    <property type="evidence" value="ECO:0007669"/>
    <property type="project" value="UniProtKB-UniRule"/>
</dbReference>
<dbReference type="GO" id="GO:0004643">
    <property type="term" value="F:phosphoribosylaminoimidazolecarboxamide formyltransferase activity"/>
    <property type="evidence" value="ECO:0007669"/>
    <property type="project" value="UniProtKB-UniRule"/>
</dbReference>
<dbReference type="GO" id="GO:0006189">
    <property type="term" value="P:'de novo' IMP biosynthetic process"/>
    <property type="evidence" value="ECO:0007669"/>
    <property type="project" value="UniProtKB-UniRule"/>
</dbReference>
<dbReference type="CDD" id="cd01421">
    <property type="entry name" value="IMPCH"/>
    <property type="match status" value="1"/>
</dbReference>
<dbReference type="FunFam" id="3.40.140.20:FF:000001">
    <property type="entry name" value="Bifunctional purine biosynthesis protein PurH"/>
    <property type="match status" value="1"/>
</dbReference>
<dbReference type="FunFam" id="3.40.140.20:FF:000002">
    <property type="entry name" value="Bifunctional purine biosynthesis protein PurH"/>
    <property type="match status" value="1"/>
</dbReference>
<dbReference type="FunFam" id="3.40.50.1380:FF:000001">
    <property type="entry name" value="Bifunctional purine biosynthesis protein PurH"/>
    <property type="match status" value="1"/>
</dbReference>
<dbReference type="Gene3D" id="3.40.140.20">
    <property type="match status" value="2"/>
</dbReference>
<dbReference type="Gene3D" id="3.40.50.1380">
    <property type="entry name" value="Methylglyoxal synthase-like domain"/>
    <property type="match status" value="1"/>
</dbReference>
<dbReference type="HAMAP" id="MF_00139">
    <property type="entry name" value="PurH"/>
    <property type="match status" value="1"/>
</dbReference>
<dbReference type="InterPro" id="IPR024051">
    <property type="entry name" value="AICAR_Tfase_dup_dom_sf"/>
</dbReference>
<dbReference type="InterPro" id="IPR016193">
    <property type="entry name" value="Cytidine_deaminase-like"/>
</dbReference>
<dbReference type="InterPro" id="IPR011607">
    <property type="entry name" value="MGS-like_dom"/>
</dbReference>
<dbReference type="InterPro" id="IPR036914">
    <property type="entry name" value="MGS-like_dom_sf"/>
</dbReference>
<dbReference type="InterPro" id="IPR002695">
    <property type="entry name" value="PurH-like"/>
</dbReference>
<dbReference type="NCBIfam" id="NF002049">
    <property type="entry name" value="PRK00881.1"/>
    <property type="match status" value="1"/>
</dbReference>
<dbReference type="NCBIfam" id="TIGR00355">
    <property type="entry name" value="purH"/>
    <property type="match status" value="1"/>
</dbReference>
<dbReference type="PANTHER" id="PTHR11692:SF0">
    <property type="entry name" value="BIFUNCTIONAL PURINE BIOSYNTHESIS PROTEIN ATIC"/>
    <property type="match status" value="1"/>
</dbReference>
<dbReference type="PANTHER" id="PTHR11692">
    <property type="entry name" value="BIFUNCTIONAL PURINE BIOSYNTHESIS PROTEIN PURH"/>
    <property type="match status" value="1"/>
</dbReference>
<dbReference type="Pfam" id="PF01808">
    <property type="entry name" value="AICARFT_IMPCHas"/>
    <property type="match status" value="1"/>
</dbReference>
<dbReference type="Pfam" id="PF02142">
    <property type="entry name" value="MGS"/>
    <property type="match status" value="1"/>
</dbReference>
<dbReference type="PIRSF" id="PIRSF000414">
    <property type="entry name" value="AICARFT_IMPCHas"/>
    <property type="match status" value="1"/>
</dbReference>
<dbReference type="SMART" id="SM00798">
    <property type="entry name" value="AICARFT_IMPCHas"/>
    <property type="match status" value="1"/>
</dbReference>
<dbReference type="SMART" id="SM00851">
    <property type="entry name" value="MGS"/>
    <property type="match status" value="1"/>
</dbReference>
<dbReference type="SUPFAM" id="SSF53927">
    <property type="entry name" value="Cytidine deaminase-like"/>
    <property type="match status" value="1"/>
</dbReference>
<dbReference type="SUPFAM" id="SSF52335">
    <property type="entry name" value="Methylglyoxal synthase-like"/>
    <property type="match status" value="1"/>
</dbReference>
<dbReference type="PROSITE" id="PS51855">
    <property type="entry name" value="MGS"/>
    <property type="match status" value="1"/>
</dbReference>
<accession>B6I5L8</accession>
<gene>
    <name evidence="1" type="primary">purH</name>
    <name type="ordered locus">ECSE_4295</name>
</gene>
<reference key="1">
    <citation type="journal article" date="2008" name="DNA Res.">
        <title>Complete genome sequence and comparative analysis of the wild-type commensal Escherichia coli strain SE11 isolated from a healthy adult.</title>
        <authorList>
            <person name="Oshima K."/>
            <person name="Toh H."/>
            <person name="Ogura Y."/>
            <person name="Sasamoto H."/>
            <person name="Morita H."/>
            <person name="Park S.-H."/>
            <person name="Ooka T."/>
            <person name="Iyoda S."/>
            <person name="Taylor T.D."/>
            <person name="Hayashi T."/>
            <person name="Itoh K."/>
            <person name="Hattori M."/>
        </authorList>
    </citation>
    <scope>NUCLEOTIDE SEQUENCE [LARGE SCALE GENOMIC DNA]</scope>
    <source>
        <strain>SE11</strain>
    </source>
</reference>
<feature type="chain" id="PRO_1000096062" description="Bifunctional purine biosynthesis protein PurH">
    <location>
        <begin position="1"/>
        <end position="529"/>
    </location>
</feature>
<feature type="domain" description="MGS-like" evidence="2">
    <location>
        <begin position="1"/>
        <end position="148"/>
    </location>
</feature>
<feature type="modified residue" description="N6-acetyllysine" evidence="1">
    <location>
        <position position="287"/>
    </location>
</feature>